<feature type="chain" id="PRO_0000188704" description="1,4-alpha-glucan branching enzyme GlgB">
    <location>
        <begin position="1"/>
        <end position="728"/>
    </location>
</feature>
<feature type="active site" description="Nucleophile" evidence="1">
    <location>
        <position position="405"/>
    </location>
</feature>
<feature type="active site" description="Proton donor" evidence="1">
    <location>
        <position position="458"/>
    </location>
</feature>
<sequence length="728" mass="84369">MSDRIDRDVINALIAGHFADPFSVLGMHKTTAGLEVRALLPDATDVWVIEPKTGRKLAKLECLDSRGFFSGVIPRRKNFFRYQLAVVWHGQQNLIDDPYRFGPLIQEMDAWLLSEGTHLRPYETLGAHADTMDGVTGTRFSVWAPNARRVSVVGQFNYWDGRRHPMRLRKESGIWELFIPGAHNGQLYKYEMIDANGNLRLKSDPYAFEAQMRPETASLICGLPEKVVQTEERKKANQFDAPISIYEVHLGSWRRHTDNNFWLSYRELADQLVPYAKWMGFTHLELLPLNEHPFDGSWGYQPTGLYAPTRRFGTRDDFRYFIDAAHAAGLNVILDWVPGHFPTDDFALAEFDGTNLYEHSDPREGYHQDWNTLIYNYGRREVSNFLVGNALYWIERFGIDALRVDAVASMIYRDYSRKEGEWIPNEFGGRENLEAIEFLRNTNRILGEQVSGAVTMAEESTDFPGVSRPQDMGGLGFWYKWNLGWMHDTLDYMKLDPIYRQYHHDKLTFGMLYNYTENFVLPLSHDEVVHGKKSILDRMPGDAWQKFANLRAYYGWMWAFPGKKLLFMGNEFAQGREWNHDASLDWHLLEGGDNWHHGVQRLVRDLNLTYRHHKAMHELDFDPYGFEWLVVDDKERSVLIFVRRDKEGNEIIVASNFTPVPRHDYRFGINQPGKWREILNTDSMHYHGSNAGNGGTVHSDEIASHGRQHSLSLTLPPLATIWLVREAE</sequence>
<name>GLGB_ECO57</name>
<dbReference type="EC" id="2.4.1.18" evidence="1"/>
<dbReference type="EMBL" id="AE005174">
    <property type="protein sequence ID" value="AAG58538.1"/>
    <property type="molecule type" value="Genomic_DNA"/>
</dbReference>
<dbReference type="EMBL" id="BA000007">
    <property type="protein sequence ID" value="BAB37700.1"/>
    <property type="molecule type" value="Genomic_DNA"/>
</dbReference>
<dbReference type="PIR" id="E91163">
    <property type="entry name" value="E91163"/>
</dbReference>
<dbReference type="PIR" id="F86009">
    <property type="entry name" value="F86009"/>
</dbReference>
<dbReference type="RefSeq" id="NP_312304.1">
    <property type="nucleotide sequence ID" value="NC_002695.1"/>
</dbReference>
<dbReference type="RefSeq" id="WP_001283734.1">
    <property type="nucleotide sequence ID" value="NZ_VOAI01000004.1"/>
</dbReference>
<dbReference type="SMR" id="Q8X6X6"/>
<dbReference type="STRING" id="155864.Z4796"/>
<dbReference type="CAZy" id="CBM48">
    <property type="family name" value="Carbohydrate-Binding Module Family 48"/>
</dbReference>
<dbReference type="CAZy" id="GH13">
    <property type="family name" value="Glycoside Hydrolase Family 13"/>
</dbReference>
<dbReference type="GeneID" id="915869"/>
<dbReference type="KEGG" id="ece:Z4796"/>
<dbReference type="KEGG" id="ecs:ECs_4277"/>
<dbReference type="PATRIC" id="fig|386585.9.peg.4468"/>
<dbReference type="eggNOG" id="COG0296">
    <property type="taxonomic scope" value="Bacteria"/>
</dbReference>
<dbReference type="HOGENOM" id="CLU_004245_3_2_6"/>
<dbReference type="OMA" id="YEMHLGS"/>
<dbReference type="UniPathway" id="UPA00164"/>
<dbReference type="Proteomes" id="UP000000558">
    <property type="component" value="Chromosome"/>
</dbReference>
<dbReference type="Proteomes" id="UP000002519">
    <property type="component" value="Chromosome"/>
</dbReference>
<dbReference type="GO" id="GO:0005829">
    <property type="term" value="C:cytosol"/>
    <property type="evidence" value="ECO:0007669"/>
    <property type="project" value="TreeGrafter"/>
</dbReference>
<dbReference type="GO" id="GO:0003844">
    <property type="term" value="F:1,4-alpha-glucan branching enzyme activity"/>
    <property type="evidence" value="ECO:0007669"/>
    <property type="project" value="UniProtKB-UniRule"/>
</dbReference>
<dbReference type="GO" id="GO:0043169">
    <property type="term" value="F:cation binding"/>
    <property type="evidence" value="ECO:0007669"/>
    <property type="project" value="InterPro"/>
</dbReference>
<dbReference type="GO" id="GO:0004553">
    <property type="term" value="F:hydrolase activity, hydrolyzing O-glycosyl compounds"/>
    <property type="evidence" value="ECO:0007669"/>
    <property type="project" value="InterPro"/>
</dbReference>
<dbReference type="GO" id="GO:0005978">
    <property type="term" value="P:glycogen biosynthetic process"/>
    <property type="evidence" value="ECO:0007669"/>
    <property type="project" value="UniProtKB-UniRule"/>
</dbReference>
<dbReference type="CDD" id="cd11322">
    <property type="entry name" value="AmyAc_Glg_BE"/>
    <property type="match status" value="1"/>
</dbReference>
<dbReference type="CDD" id="cd02855">
    <property type="entry name" value="E_set_GBE_prok_N"/>
    <property type="match status" value="1"/>
</dbReference>
<dbReference type="FunFam" id="2.60.40.10:FF:000169">
    <property type="entry name" value="1,4-alpha-glucan branching enzyme GlgB"/>
    <property type="match status" value="1"/>
</dbReference>
<dbReference type="FunFam" id="2.60.40.10:FF:000331">
    <property type="entry name" value="1,4-alpha-glucan branching enzyme GlgB"/>
    <property type="match status" value="1"/>
</dbReference>
<dbReference type="FunFam" id="2.60.40.1180:FF:000002">
    <property type="entry name" value="1,4-alpha-glucan branching enzyme GlgB"/>
    <property type="match status" value="1"/>
</dbReference>
<dbReference type="FunFam" id="3.20.20.80:FF:000003">
    <property type="entry name" value="1,4-alpha-glucan branching enzyme GlgB"/>
    <property type="match status" value="1"/>
</dbReference>
<dbReference type="Gene3D" id="3.20.20.80">
    <property type="entry name" value="Glycosidases"/>
    <property type="match status" value="1"/>
</dbReference>
<dbReference type="Gene3D" id="2.60.40.1180">
    <property type="entry name" value="Golgi alpha-mannosidase II"/>
    <property type="match status" value="1"/>
</dbReference>
<dbReference type="Gene3D" id="2.60.40.10">
    <property type="entry name" value="Immunoglobulins"/>
    <property type="match status" value="2"/>
</dbReference>
<dbReference type="HAMAP" id="MF_00685">
    <property type="entry name" value="GlgB"/>
    <property type="match status" value="1"/>
</dbReference>
<dbReference type="InterPro" id="IPR006048">
    <property type="entry name" value="A-amylase/branching_C"/>
</dbReference>
<dbReference type="InterPro" id="IPR037439">
    <property type="entry name" value="Branching_enzy"/>
</dbReference>
<dbReference type="InterPro" id="IPR006407">
    <property type="entry name" value="GlgB"/>
</dbReference>
<dbReference type="InterPro" id="IPR054169">
    <property type="entry name" value="GlgB_N"/>
</dbReference>
<dbReference type="InterPro" id="IPR044143">
    <property type="entry name" value="GlgB_N_E_set_prok"/>
</dbReference>
<dbReference type="InterPro" id="IPR006047">
    <property type="entry name" value="Glyco_hydro_13_cat_dom"/>
</dbReference>
<dbReference type="InterPro" id="IPR004193">
    <property type="entry name" value="Glyco_hydro_13_N"/>
</dbReference>
<dbReference type="InterPro" id="IPR013780">
    <property type="entry name" value="Glyco_hydro_b"/>
</dbReference>
<dbReference type="InterPro" id="IPR017853">
    <property type="entry name" value="Glycoside_hydrolase_SF"/>
</dbReference>
<dbReference type="InterPro" id="IPR013783">
    <property type="entry name" value="Ig-like_fold"/>
</dbReference>
<dbReference type="InterPro" id="IPR014756">
    <property type="entry name" value="Ig_E-set"/>
</dbReference>
<dbReference type="NCBIfam" id="TIGR01515">
    <property type="entry name" value="branching_enzym"/>
    <property type="match status" value="1"/>
</dbReference>
<dbReference type="NCBIfam" id="NF003811">
    <property type="entry name" value="PRK05402.1"/>
    <property type="match status" value="1"/>
</dbReference>
<dbReference type="NCBIfam" id="NF008967">
    <property type="entry name" value="PRK12313.1"/>
    <property type="match status" value="1"/>
</dbReference>
<dbReference type="PANTHER" id="PTHR43651">
    <property type="entry name" value="1,4-ALPHA-GLUCAN-BRANCHING ENZYME"/>
    <property type="match status" value="1"/>
</dbReference>
<dbReference type="PANTHER" id="PTHR43651:SF3">
    <property type="entry name" value="1,4-ALPHA-GLUCAN-BRANCHING ENZYME"/>
    <property type="match status" value="1"/>
</dbReference>
<dbReference type="Pfam" id="PF00128">
    <property type="entry name" value="Alpha-amylase"/>
    <property type="match status" value="1"/>
</dbReference>
<dbReference type="Pfam" id="PF02806">
    <property type="entry name" value="Alpha-amylase_C"/>
    <property type="match status" value="1"/>
</dbReference>
<dbReference type="Pfam" id="PF02922">
    <property type="entry name" value="CBM_48"/>
    <property type="match status" value="1"/>
</dbReference>
<dbReference type="Pfam" id="PF22019">
    <property type="entry name" value="GlgB_N"/>
    <property type="match status" value="1"/>
</dbReference>
<dbReference type="PIRSF" id="PIRSF000463">
    <property type="entry name" value="GlgB"/>
    <property type="match status" value="1"/>
</dbReference>
<dbReference type="SMART" id="SM00642">
    <property type="entry name" value="Aamy"/>
    <property type="match status" value="1"/>
</dbReference>
<dbReference type="SUPFAM" id="SSF51445">
    <property type="entry name" value="(Trans)glycosidases"/>
    <property type="match status" value="1"/>
</dbReference>
<dbReference type="SUPFAM" id="SSF81296">
    <property type="entry name" value="E set domains"/>
    <property type="match status" value="2"/>
</dbReference>
<dbReference type="SUPFAM" id="SSF51011">
    <property type="entry name" value="Glycosyl hydrolase domain"/>
    <property type="match status" value="1"/>
</dbReference>
<reference key="1">
    <citation type="journal article" date="2001" name="Nature">
        <title>Genome sequence of enterohaemorrhagic Escherichia coli O157:H7.</title>
        <authorList>
            <person name="Perna N.T."/>
            <person name="Plunkett G. III"/>
            <person name="Burland V."/>
            <person name="Mau B."/>
            <person name="Glasner J.D."/>
            <person name="Rose D.J."/>
            <person name="Mayhew G.F."/>
            <person name="Evans P.S."/>
            <person name="Gregor J."/>
            <person name="Kirkpatrick H.A."/>
            <person name="Posfai G."/>
            <person name="Hackett J."/>
            <person name="Klink S."/>
            <person name="Boutin A."/>
            <person name="Shao Y."/>
            <person name="Miller L."/>
            <person name="Grotbeck E.J."/>
            <person name="Davis N.W."/>
            <person name="Lim A."/>
            <person name="Dimalanta E.T."/>
            <person name="Potamousis K."/>
            <person name="Apodaca J."/>
            <person name="Anantharaman T.S."/>
            <person name="Lin J."/>
            <person name="Yen G."/>
            <person name="Schwartz D.C."/>
            <person name="Welch R.A."/>
            <person name="Blattner F.R."/>
        </authorList>
    </citation>
    <scope>NUCLEOTIDE SEQUENCE [LARGE SCALE GENOMIC DNA]</scope>
    <source>
        <strain>O157:H7 / EDL933 / ATCC 700927 / EHEC</strain>
    </source>
</reference>
<reference key="2">
    <citation type="journal article" date="2001" name="DNA Res.">
        <title>Complete genome sequence of enterohemorrhagic Escherichia coli O157:H7 and genomic comparison with a laboratory strain K-12.</title>
        <authorList>
            <person name="Hayashi T."/>
            <person name="Makino K."/>
            <person name="Ohnishi M."/>
            <person name="Kurokawa K."/>
            <person name="Ishii K."/>
            <person name="Yokoyama K."/>
            <person name="Han C.-G."/>
            <person name="Ohtsubo E."/>
            <person name="Nakayama K."/>
            <person name="Murata T."/>
            <person name="Tanaka M."/>
            <person name="Tobe T."/>
            <person name="Iida T."/>
            <person name="Takami H."/>
            <person name="Honda T."/>
            <person name="Sasakawa C."/>
            <person name="Ogasawara N."/>
            <person name="Yasunaga T."/>
            <person name="Kuhara S."/>
            <person name="Shiba T."/>
            <person name="Hattori M."/>
            <person name="Shinagawa H."/>
        </authorList>
    </citation>
    <scope>NUCLEOTIDE SEQUENCE [LARGE SCALE GENOMIC DNA]</scope>
    <source>
        <strain>O157:H7 / Sakai / RIMD 0509952 / EHEC</strain>
    </source>
</reference>
<organism>
    <name type="scientific">Escherichia coli O157:H7</name>
    <dbReference type="NCBI Taxonomy" id="83334"/>
    <lineage>
        <taxon>Bacteria</taxon>
        <taxon>Pseudomonadati</taxon>
        <taxon>Pseudomonadota</taxon>
        <taxon>Gammaproteobacteria</taxon>
        <taxon>Enterobacterales</taxon>
        <taxon>Enterobacteriaceae</taxon>
        <taxon>Escherichia</taxon>
    </lineage>
</organism>
<accession>Q8X6X6</accession>
<gene>
    <name evidence="1" type="primary">glgB</name>
    <name type="ordered locus">Z4796</name>
    <name type="ordered locus">ECs4277</name>
</gene>
<proteinExistence type="inferred from homology"/>
<evidence type="ECO:0000255" key="1">
    <source>
        <dbReference type="HAMAP-Rule" id="MF_00685"/>
    </source>
</evidence>
<protein>
    <recommendedName>
        <fullName evidence="1">1,4-alpha-glucan branching enzyme GlgB</fullName>
        <ecNumber evidence="1">2.4.1.18</ecNumber>
    </recommendedName>
    <alternativeName>
        <fullName evidence="1">1,4-alpha-D-glucan:1,4-alpha-D-glucan 6-glucosyl-transferase</fullName>
    </alternativeName>
    <alternativeName>
        <fullName evidence="1">Alpha-(1-&gt;4)-glucan branching enzyme</fullName>
    </alternativeName>
    <alternativeName>
        <fullName evidence="1">Glycogen branching enzyme</fullName>
        <shortName evidence="1">BE</shortName>
    </alternativeName>
</protein>
<comment type="function">
    <text evidence="1">Catalyzes the formation of the alpha-1,6-glucosidic linkages in glycogen by scission of a 1,4-alpha-linked oligosaccharide from growing alpha-1,4-glucan chains and the subsequent attachment of the oligosaccharide to the alpha-1,6 position.</text>
</comment>
<comment type="catalytic activity">
    <reaction evidence="1">
        <text>Transfers a segment of a (1-&gt;4)-alpha-D-glucan chain to a primary hydroxy group in a similar glucan chain.</text>
        <dbReference type="EC" id="2.4.1.18"/>
    </reaction>
</comment>
<comment type="pathway">
    <text evidence="1">Glycan biosynthesis; glycogen biosynthesis.</text>
</comment>
<comment type="subunit">
    <text evidence="1">Monomer.</text>
</comment>
<comment type="similarity">
    <text evidence="1">Belongs to the glycosyl hydrolase 13 family. GlgB subfamily.</text>
</comment>
<keyword id="KW-0119">Carbohydrate metabolism</keyword>
<keyword id="KW-0320">Glycogen biosynthesis</keyword>
<keyword id="KW-0321">Glycogen metabolism</keyword>
<keyword id="KW-0328">Glycosyltransferase</keyword>
<keyword id="KW-1185">Reference proteome</keyword>
<keyword id="KW-0808">Transferase</keyword>